<keyword id="KW-0238">DNA-binding</keyword>
<keyword id="KW-1017">Isopeptide bond</keyword>
<keyword id="KW-0479">Metal-binding</keyword>
<keyword id="KW-0539">Nucleus</keyword>
<keyword id="KW-1185">Reference proteome</keyword>
<keyword id="KW-0677">Repeat</keyword>
<keyword id="KW-0804">Transcription</keyword>
<keyword id="KW-0805">Transcription regulation</keyword>
<keyword id="KW-0832">Ubl conjugation</keyword>
<keyword id="KW-0862">Zinc</keyword>
<keyword id="KW-0863">Zinc-finger</keyword>
<feature type="chain" id="PRO_0000047595" description="Zinc finger protein 445">
    <location>
        <begin position="1"/>
        <end position="986"/>
    </location>
</feature>
<feature type="domain" description="SCAN box" evidence="4">
    <location>
        <begin position="52"/>
        <end position="134"/>
    </location>
</feature>
<feature type="domain" description="KRAB" evidence="3">
    <location>
        <begin position="219"/>
        <end position="289"/>
    </location>
</feature>
<feature type="zinc finger region" description="C2H2-type 1" evidence="2">
    <location>
        <begin position="470"/>
        <end position="492"/>
    </location>
</feature>
<feature type="zinc finger region" description="C2H2-type 2" evidence="2">
    <location>
        <begin position="498"/>
        <end position="520"/>
    </location>
</feature>
<feature type="zinc finger region" description="C2H2-type 3" evidence="2">
    <location>
        <begin position="553"/>
        <end position="575"/>
    </location>
</feature>
<feature type="zinc finger region" description="C2H2-type 4" evidence="2">
    <location>
        <begin position="581"/>
        <end position="604"/>
    </location>
</feature>
<feature type="zinc finger region" description="C2H2-type 5" evidence="2">
    <location>
        <begin position="634"/>
        <end position="656"/>
    </location>
</feature>
<feature type="zinc finger region" description="C2H2-type 6" evidence="2">
    <location>
        <begin position="662"/>
        <end position="686"/>
    </location>
</feature>
<feature type="zinc finger region" description="C2H2-type 7" evidence="2">
    <location>
        <begin position="718"/>
        <end position="740"/>
    </location>
</feature>
<feature type="zinc finger region" description="C2H2-type 8" evidence="2">
    <location>
        <begin position="746"/>
        <end position="768"/>
    </location>
</feature>
<feature type="zinc finger region" description="C2H2-type 9" evidence="2">
    <location>
        <begin position="796"/>
        <end position="818"/>
    </location>
</feature>
<feature type="zinc finger region" description="C2H2-type 10" evidence="2">
    <location>
        <begin position="824"/>
        <end position="846"/>
    </location>
</feature>
<feature type="zinc finger region" description="C2H2-type 11" evidence="2">
    <location>
        <begin position="933"/>
        <end position="955"/>
    </location>
</feature>
<feature type="zinc finger region" description="C2H2-type 12" evidence="2">
    <location>
        <begin position="961"/>
        <end position="983"/>
    </location>
</feature>
<feature type="region of interest" description="Disordered" evidence="5">
    <location>
        <begin position="433"/>
        <end position="460"/>
    </location>
</feature>
<feature type="compositionally biased region" description="Basic and acidic residues" evidence="5">
    <location>
        <begin position="439"/>
        <end position="460"/>
    </location>
</feature>
<feature type="cross-link" description="Glycyl lysine isopeptide (Lys-Gly) (interchain with G-Cter in SUMO2)" evidence="1">
    <location>
        <position position="302"/>
    </location>
</feature>
<feature type="cross-link" description="Glycyl lysine isopeptide (Lys-Gly) (interchain with G-Cter in SUMO2)" evidence="1">
    <location>
        <position position="360"/>
    </location>
</feature>
<feature type="cross-link" description="Glycyl lysine isopeptide (Lys-Gly) (interchain with G-Cter in SUMO2)" evidence="1">
    <location>
        <position position="385"/>
    </location>
</feature>
<feature type="cross-link" description="Glycyl lysine isopeptide (Lys-Gly) (interchain with G-Cter in SUMO2)" evidence="1">
    <location>
        <position position="524"/>
    </location>
</feature>
<feature type="cross-link" description="Glycyl lysine isopeptide (Lys-Gly) (interchain with G-Cter in SUMO2)" evidence="1">
    <location>
        <position position="609"/>
    </location>
</feature>
<feature type="cross-link" description="Glycyl lysine isopeptide (Lys-Gly) (interchain with G-Cter in SUMO2)" evidence="1">
    <location>
        <position position="691"/>
    </location>
</feature>
<feature type="cross-link" description="Glycyl lysine isopeptide (Lys-Gly) (interchain with G-Cter in SUMO2)" evidence="1">
    <location>
        <position position="929"/>
    </location>
</feature>
<feature type="sequence conflict" description="In Ref. 2; AAH34572." evidence="7" ref="2">
    <original>V</original>
    <variation>L</variation>
    <location>
        <position position="495"/>
    </location>
</feature>
<feature type="sequence conflict" description="In Ref. 2; AAH34572." evidence="7" ref="2">
    <original>R</original>
    <variation>Q</variation>
    <location>
        <position position="709"/>
    </location>
</feature>
<accession>Q8R2V3</accession>
<accession>A4FTX7</accession>
<accession>Q8K216</accession>
<name>ZN445_MOUSE</name>
<comment type="function">
    <text evidence="6">Transcription regulator required to maintain maternal and paternal gene imprinting, a process by which gene expression is restricted in a parent of origin-specific manner by epigenetic modification of genomic DNA and chromatin, including DNA methylation. Acts by controlling DNA methylation during the earliest multicellular stages of development at multiple imprinting control regions (ICRs) (PubMed:30602440). Acts together with ZFP57, but ZFP57 plays the predominant role in imprinting maintenance. In contrast, ZNF445 seems to be the major factor in human early embryonic imprinting maintenance (PubMed:30602440).</text>
</comment>
<comment type="subcellular location">
    <subcellularLocation>
        <location evidence="6">Nucleus</location>
    </subcellularLocation>
    <text evidence="6">Binds various differentially methylated regions (DMR).</text>
</comment>
<comment type="disruption phenotype">
    <text evidence="6">About one-third of zygotic mutants survived to adulthood. They do not exhibit any loss of methylation imprints at ICRs in the brain and liver at 12.5 dpc (PubMed:30602440). Double zygotic mutations of ZFP57 and ZNF445 are embryonically lethal and embryos show no gross morphological abnormalities but significant reduction in size and weight at 11.5 dpc, a phenotype more pronounced than in ZFP57 mutant mice with a more severe loss of impinting (PubMed:30602440).</text>
</comment>
<comment type="similarity">
    <text evidence="7">Belongs to the krueppel C2H2-type zinc-finger protein family.</text>
</comment>
<comment type="sequence caution" evidence="7">
    <conflict type="erroneous initiation">
        <sequence resource="EMBL-CDS" id="AAH34572"/>
    </conflict>
    <text>Extended N-terminus.</text>
</comment>
<protein>
    <recommendedName>
        <fullName>Zinc finger protein 445</fullName>
    </recommendedName>
</protein>
<sequence length="986" mass="114774">MPPGRWHAARSAQVSREQGCLRMVKEEEEDGYISMQTARPQTLNRPGQELFRQLFRQLRYHESSGPLETLSRLQELCRWWMRPDVLSKAQMLELLVLEQFLSILPGELRTWVQLHCPESGAEVVALLEELQRDLDGTPLKDPCLTQNPDVHWIGTSALQPAQIWSPASHLKNSSALEDHLETSHGIGICDVLAEQTDSPAVSVPDYFQLEEGIEYQEALTFQDVEVTFSQEEWGCLNSAQRNLYRDVILENYGNVVSVVGSSPKPALISWLEARKPWGVNICTVQLKRDADAAPEGGKLQIKPNKFILKQKPSEYIEACVKTSVSPETSVSEETGLKESFKQKSRLQTSCGDSIQMKEMKEGADISQRTGRESEVLRNNDILELKHVKCVSVSRKRLSFKHGYDRNFRKSSHHYNNKYGEGLRGTGEGFGVYQNTGLKENGKDRYGETSRKSWHAHPEHRQPSYSEEGLFQCRVCGKAFKWRSNRIRHEKIHTGVKPYQCSLCEKAFQRLSSYRLHQKTHSKQKRGSSKYKNALTCSLDVSHHLTDRDERKHLHCNQCGKNFSCKSYAIEHQRIHTQEKPYKCTRCRKTFRWKSNFSRHMKLHHKEVYKQEKRQEDFKQSYRQSQVISTVEKTFPCQNCGKTFTQKKSLIEHQRIHTGEKPYQCSGCGETFTYRSSYIIHMKRTQHAIKIKPEHGCLTFSQGAVFPIPRGSHNTEGSNKCKYCGKAFHNRSFLLIHERVHTREKPYQCRECEKAFRWSSNLYRHQRKHFLHKRYKYRESKETSNLQSKILIDQKPFWCQECGKTFTRKRSLLDHKGIHSGERRFKCNLCEKSFDRNYRLVNHQRIHTTEQPQWRDKDFVGIHARSVDQRKHSNTLQSEYGLHSDKPGLSYCQDVRLNIQELSGKLRKECDNPSDESSKSIAFQNVPTKKKACHKCSTCGKTFKKHSHLISHKRCHTKERPFKCIVCGKTFRWSSNLTRHMKNHVRN</sequence>
<reference key="1">
    <citation type="submission" date="2003-07" db="EMBL/GenBank/DDBJ databases">
        <title>Cloning of mouse zinc finger protein 445.</title>
        <authorList>
            <person name="Zhou G."/>
            <person name="Wang J."/>
            <person name="Zhang Y."/>
        </authorList>
    </citation>
    <scope>NUCLEOTIDE SEQUENCE [MRNA]</scope>
    <source>
        <strain>C57BL/6J</strain>
    </source>
</reference>
<reference key="2">
    <citation type="journal article" date="2004" name="Genome Res.">
        <title>The status, quality, and expansion of the NIH full-length cDNA project: the Mammalian Gene Collection (MGC).</title>
        <authorList>
            <consortium name="The MGC Project Team"/>
        </authorList>
    </citation>
    <scope>NUCLEOTIDE SEQUENCE [LARGE SCALE MRNA]</scope>
    <source>
        <strain>C57BL/6J</strain>
        <tissue>Brain</tissue>
    </source>
</reference>
<reference key="3">
    <citation type="journal article" date="2019" name="Genes Dev.">
        <title>ZNF445 is a primary regulator of genomic imprinting.</title>
        <authorList>
            <person name="Takahashi N."/>
            <person name="Coluccio A."/>
            <person name="Thorball C.W."/>
            <person name="Planet E."/>
            <person name="Shi H."/>
            <person name="Offner S."/>
            <person name="Turelli P."/>
            <person name="Imbeault M."/>
            <person name="Ferguson-Smith A.C."/>
            <person name="Trono D."/>
        </authorList>
    </citation>
    <scope>FUNCTION</scope>
    <scope>DISRUPTION PHENOTYPE</scope>
</reference>
<evidence type="ECO:0000250" key="1">
    <source>
        <dbReference type="UniProtKB" id="P59923"/>
    </source>
</evidence>
<evidence type="ECO:0000255" key="2">
    <source>
        <dbReference type="PROSITE-ProRule" id="PRU00042"/>
    </source>
</evidence>
<evidence type="ECO:0000255" key="3">
    <source>
        <dbReference type="PROSITE-ProRule" id="PRU00119"/>
    </source>
</evidence>
<evidence type="ECO:0000255" key="4">
    <source>
        <dbReference type="PROSITE-ProRule" id="PRU00187"/>
    </source>
</evidence>
<evidence type="ECO:0000256" key="5">
    <source>
        <dbReference type="SAM" id="MobiDB-lite"/>
    </source>
</evidence>
<evidence type="ECO:0000269" key="6">
    <source>
    </source>
</evidence>
<evidence type="ECO:0000305" key="7"/>
<proteinExistence type="evidence at transcript level"/>
<gene>
    <name type="primary">Znf445</name>
    <name type="synonym">Zfp445</name>
</gene>
<dbReference type="EMBL" id="AY341877">
    <property type="protein sequence ID" value="AAQ24161.1"/>
    <property type="molecule type" value="mRNA"/>
</dbReference>
<dbReference type="EMBL" id="BC027167">
    <property type="protein sequence ID" value="AAH27167.1"/>
    <property type="molecule type" value="mRNA"/>
</dbReference>
<dbReference type="EMBL" id="BC034572">
    <property type="protein sequence ID" value="AAH34572.1"/>
    <property type="status" value="ALT_INIT"/>
    <property type="molecule type" value="mRNA"/>
</dbReference>
<dbReference type="EMBL" id="BC099896">
    <property type="protein sequence ID" value="AAH99896.1"/>
    <property type="molecule type" value="mRNA"/>
</dbReference>
<dbReference type="CCDS" id="CCDS23648.1"/>
<dbReference type="RefSeq" id="NP_775540.4">
    <property type="nucleotide sequence ID" value="NM_173364.5"/>
</dbReference>
<dbReference type="RefSeq" id="XP_006512186.1">
    <property type="nucleotide sequence ID" value="XM_006512123.2"/>
</dbReference>
<dbReference type="FunCoup" id="Q8R2V3">
    <property type="interactions" value="986"/>
</dbReference>
<dbReference type="STRING" id="10090.ENSMUSP00000151198"/>
<dbReference type="iPTMnet" id="Q8R2V3"/>
<dbReference type="PhosphoSitePlus" id="Q8R2V3"/>
<dbReference type="PaxDb" id="10090-ENSMUSP00000055738"/>
<dbReference type="ProteomicsDB" id="275289"/>
<dbReference type="Antibodypedia" id="29430">
    <property type="antibodies" value="40 antibodies from 12 providers"/>
</dbReference>
<dbReference type="DNASU" id="235682"/>
<dbReference type="Ensembl" id="ENSMUST00000056467.8">
    <property type="protein sequence ID" value="ENSMUSP00000055738.8"/>
    <property type="gene ID" value="ENSMUSG00000047036.9"/>
</dbReference>
<dbReference type="Ensembl" id="ENSMUST00000216063.2">
    <property type="protein sequence ID" value="ENSMUSP00000151198.2"/>
    <property type="gene ID" value="ENSMUSG00000047036.9"/>
</dbReference>
<dbReference type="GeneID" id="235682"/>
<dbReference type="KEGG" id="mmu:235682"/>
<dbReference type="UCSC" id="uc009sfe.2">
    <property type="organism name" value="mouse"/>
</dbReference>
<dbReference type="AGR" id="MGI:2143340"/>
<dbReference type="CTD" id="235682"/>
<dbReference type="MGI" id="MGI:2143340">
    <property type="gene designation" value="Zfp445"/>
</dbReference>
<dbReference type="VEuPathDB" id="HostDB:ENSMUSG00000047036"/>
<dbReference type="eggNOG" id="KOG1721">
    <property type="taxonomic scope" value="Eukaryota"/>
</dbReference>
<dbReference type="GeneTree" id="ENSGT00900000141186"/>
<dbReference type="HOGENOM" id="CLU_002678_23_0_1"/>
<dbReference type="InParanoid" id="Q8R2V3"/>
<dbReference type="OMA" id="PYEIGVC"/>
<dbReference type="OrthoDB" id="8922241at2759"/>
<dbReference type="PhylomeDB" id="Q8R2V3"/>
<dbReference type="TreeFam" id="TF350827"/>
<dbReference type="Reactome" id="R-MMU-212436">
    <property type="pathway name" value="Generic Transcription Pathway"/>
</dbReference>
<dbReference type="BioGRID-ORCS" id="235682">
    <property type="hits" value="5 hits in 78 CRISPR screens"/>
</dbReference>
<dbReference type="ChiTaRS" id="Zfp445">
    <property type="organism name" value="mouse"/>
</dbReference>
<dbReference type="PRO" id="PR:Q8R2V3"/>
<dbReference type="Proteomes" id="UP000000589">
    <property type="component" value="Chromosome 9"/>
</dbReference>
<dbReference type="RNAct" id="Q8R2V3">
    <property type="molecule type" value="protein"/>
</dbReference>
<dbReference type="Bgee" id="ENSMUSG00000047036">
    <property type="expression patterns" value="Expressed in secondary palatal shelf and 263 other cell types or tissues"/>
</dbReference>
<dbReference type="ExpressionAtlas" id="Q8R2V3">
    <property type="expression patterns" value="baseline and differential"/>
</dbReference>
<dbReference type="GO" id="GO:0005634">
    <property type="term" value="C:nucleus"/>
    <property type="evidence" value="ECO:0000314"/>
    <property type="project" value="UniProtKB"/>
</dbReference>
<dbReference type="GO" id="GO:0003682">
    <property type="term" value="F:chromatin binding"/>
    <property type="evidence" value="ECO:0000314"/>
    <property type="project" value="UniProtKB"/>
</dbReference>
<dbReference type="GO" id="GO:0010385">
    <property type="term" value="F:double-stranded methylated DNA binding"/>
    <property type="evidence" value="ECO:0000314"/>
    <property type="project" value="UniProtKB"/>
</dbReference>
<dbReference type="GO" id="GO:0008270">
    <property type="term" value="F:zinc ion binding"/>
    <property type="evidence" value="ECO:0007669"/>
    <property type="project" value="UniProtKB-KW"/>
</dbReference>
<dbReference type="GO" id="GO:0044726">
    <property type="term" value="P:epigenetic programing of female pronucleus"/>
    <property type="evidence" value="ECO:0000314"/>
    <property type="project" value="UniProtKB"/>
</dbReference>
<dbReference type="GO" id="GO:0044027">
    <property type="term" value="P:negative regulation of gene expression via chromosomal CpG island methylation"/>
    <property type="evidence" value="ECO:0000316"/>
    <property type="project" value="UniProtKB"/>
</dbReference>
<dbReference type="GO" id="GO:0006355">
    <property type="term" value="P:regulation of DNA-templated transcription"/>
    <property type="evidence" value="ECO:0007669"/>
    <property type="project" value="InterPro"/>
</dbReference>
<dbReference type="CDD" id="cd07765">
    <property type="entry name" value="KRAB_A-box"/>
    <property type="match status" value="1"/>
</dbReference>
<dbReference type="CDD" id="cd07936">
    <property type="entry name" value="SCAN"/>
    <property type="match status" value="1"/>
</dbReference>
<dbReference type="FunFam" id="3.30.160.60:FF:000100">
    <property type="entry name" value="Zinc finger 45-like"/>
    <property type="match status" value="1"/>
</dbReference>
<dbReference type="FunFam" id="3.30.160.60:FF:000151">
    <property type="entry name" value="Zinc finger and SCAN domain-containing 21"/>
    <property type="match status" value="1"/>
</dbReference>
<dbReference type="FunFam" id="3.30.160.60:FF:001527">
    <property type="entry name" value="Zinc finger protein"/>
    <property type="match status" value="1"/>
</dbReference>
<dbReference type="FunFam" id="3.30.160.60:FF:000478">
    <property type="entry name" value="Zinc finger protein 133"/>
    <property type="match status" value="1"/>
</dbReference>
<dbReference type="FunFam" id="3.30.160.60:FF:000005">
    <property type="entry name" value="Zinc finger protein 14 homolog"/>
    <property type="match status" value="1"/>
</dbReference>
<dbReference type="FunFam" id="3.30.160.60:FF:000688">
    <property type="entry name" value="zinc finger protein 197 isoform X1"/>
    <property type="match status" value="1"/>
</dbReference>
<dbReference type="FunFam" id="1.10.4020.10:FF:000001">
    <property type="entry name" value="zinc finger protein 263 isoform X1"/>
    <property type="match status" value="1"/>
</dbReference>
<dbReference type="FunFam" id="3.30.160.60:FF:000193">
    <property type="entry name" value="Zinc finger protein 300"/>
    <property type="match status" value="1"/>
</dbReference>
<dbReference type="FunFam" id="3.30.160.60:FF:000690">
    <property type="entry name" value="Zinc finger protein 354C"/>
    <property type="match status" value="1"/>
</dbReference>
<dbReference type="FunFam" id="3.30.160.60:FF:000624">
    <property type="entry name" value="zinc finger protein 697"/>
    <property type="match status" value="2"/>
</dbReference>
<dbReference type="FunFam" id="3.30.160.60:FF:000176">
    <property type="entry name" value="zinc finger protein 70"/>
    <property type="match status" value="1"/>
</dbReference>
<dbReference type="Gene3D" id="6.10.140.140">
    <property type="match status" value="1"/>
</dbReference>
<dbReference type="Gene3D" id="3.30.160.60">
    <property type="entry name" value="Classic Zinc Finger"/>
    <property type="match status" value="12"/>
</dbReference>
<dbReference type="Gene3D" id="1.10.4020.10">
    <property type="entry name" value="DNA breaking-rejoining enzymes"/>
    <property type="match status" value="1"/>
</dbReference>
<dbReference type="InterPro" id="IPR001909">
    <property type="entry name" value="KRAB"/>
</dbReference>
<dbReference type="InterPro" id="IPR036051">
    <property type="entry name" value="KRAB_dom_sf"/>
</dbReference>
<dbReference type="InterPro" id="IPR003309">
    <property type="entry name" value="SCAN_dom"/>
</dbReference>
<dbReference type="InterPro" id="IPR038269">
    <property type="entry name" value="SCAN_sf"/>
</dbReference>
<dbReference type="InterPro" id="IPR050331">
    <property type="entry name" value="Zinc_finger"/>
</dbReference>
<dbReference type="InterPro" id="IPR036236">
    <property type="entry name" value="Znf_C2H2_sf"/>
</dbReference>
<dbReference type="InterPro" id="IPR013087">
    <property type="entry name" value="Znf_C2H2_type"/>
</dbReference>
<dbReference type="PANTHER" id="PTHR16515:SF66">
    <property type="entry name" value="C2H2-TYPE DOMAIN-CONTAINING PROTEIN"/>
    <property type="match status" value="1"/>
</dbReference>
<dbReference type="PANTHER" id="PTHR16515">
    <property type="entry name" value="PR DOMAIN ZINC FINGER PROTEIN"/>
    <property type="match status" value="1"/>
</dbReference>
<dbReference type="Pfam" id="PF01352">
    <property type="entry name" value="KRAB"/>
    <property type="match status" value="1"/>
</dbReference>
<dbReference type="Pfam" id="PF02023">
    <property type="entry name" value="SCAN"/>
    <property type="match status" value="1"/>
</dbReference>
<dbReference type="Pfam" id="PF00096">
    <property type="entry name" value="zf-C2H2"/>
    <property type="match status" value="8"/>
</dbReference>
<dbReference type="SMART" id="SM00349">
    <property type="entry name" value="KRAB"/>
    <property type="match status" value="1"/>
</dbReference>
<dbReference type="SMART" id="SM00431">
    <property type="entry name" value="SCAN"/>
    <property type="match status" value="1"/>
</dbReference>
<dbReference type="SMART" id="SM00355">
    <property type="entry name" value="ZnF_C2H2"/>
    <property type="match status" value="12"/>
</dbReference>
<dbReference type="SUPFAM" id="SSF57667">
    <property type="entry name" value="beta-beta-alpha zinc fingers"/>
    <property type="match status" value="6"/>
</dbReference>
<dbReference type="SUPFAM" id="SSF109640">
    <property type="entry name" value="KRAB domain (Kruppel-associated box)"/>
    <property type="match status" value="1"/>
</dbReference>
<dbReference type="SUPFAM" id="SSF47353">
    <property type="entry name" value="Retrovirus capsid dimerization domain-like"/>
    <property type="match status" value="1"/>
</dbReference>
<dbReference type="PROSITE" id="PS50805">
    <property type="entry name" value="KRAB"/>
    <property type="match status" value="1"/>
</dbReference>
<dbReference type="PROSITE" id="PS50804">
    <property type="entry name" value="SCAN_BOX"/>
    <property type="match status" value="1"/>
</dbReference>
<dbReference type="PROSITE" id="PS00028">
    <property type="entry name" value="ZINC_FINGER_C2H2_1"/>
    <property type="match status" value="12"/>
</dbReference>
<dbReference type="PROSITE" id="PS50157">
    <property type="entry name" value="ZINC_FINGER_C2H2_2"/>
    <property type="match status" value="12"/>
</dbReference>
<organism>
    <name type="scientific">Mus musculus</name>
    <name type="common">Mouse</name>
    <dbReference type="NCBI Taxonomy" id="10090"/>
    <lineage>
        <taxon>Eukaryota</taxon>
        <taxon>Metazoa</taxon>
        <taxon>Chordata</taxon>
        <taxon>Craniata</taxon>
        <taxon>Vertebrata</taxon>
        <taxon>Euteleostomi</taxon>
        <taxon>Mammalia</taxon>
        <taxon>Eutheria</taxon>
        <taxon>Euarchontoglires</taxon>
        <taxon>Glires</taxon>
        <taxon>Rodentia</taxon>
        <taxon>Myomorpha</taxon>
        <taxon>Muroidea</taxon>
        <taxon>Muridae</taxon>
        <taxon>Murinae</taxon>
        <taxon>Mus</taxon>
        <taxon>Mus</taxon>
    </lineage>
</organism>